<proteinExistence type="inferred from homology"/>
<sequence>MVELLGIIRIRGWAKAPWYINETLEMLRLRYNFNTMMYPKTSQILGMLNKVSPYVTWGEIDPDTLKLLIIKRLETAKGDKVSDSYVKEVLKIENIDTMVKQLYEGKIYLHKLDQYFKLPIRLHPPKGGFKGSVKRPYKNKGEFGYRGDKINELMRRMM</sequence>
<keyword id="KW-0687">Ribonucleoprotein</keyword>
<keyword id="KW-0689">Ribosomal protein</keyword>
<comment type="subunit">
    <text evidence="1">Part of the 50S ribosomal subunit.</text>
</comment>
<comment type="similarity">
    <text evidence="1">Belongs to the universal ribosomal protein uL30 family.</text>
</comment>
<feature type="chain" id="PRO_1000215076" description="Large ribosomal subunit protein uL30">
    <location>
        <begin position="1"/>
        <end position="158"/>
    </location>
</feature>
<organism>
    <name type="scientific">Saccharolobus islandicus (strain M.16.4 / Kamchatka #3)</name>
    <name type="common">Sulfolobus islandicus</name>
    <dbReference type="NCBI Taxonomy" id="426118"/>
    <lineage>
        <taxon>Archaea</taxon>
        <taxon>Thermoproteota</taxon>
        <taxon>Thermoprotei</taxon>
        <taxon>Sulfolobales</taxon>
        <taxon>Sulfolobaceae</taxon>
        <taxon>Saccharolobus</taxon>
    </lineage>
</organism>
<name>RL30_SACI6</name>
<protein>
    <recommendedName>
        <fullName evidence="1">Large ribosomal subunit protein uL30</fullName>
    </recommendedName>
    <alternativeName>
        <fullName evidence="2">50S ribosomal protein L30</fullName>
    </alternativeName>
</protein>
<gene>
    <name evidence="1" type="primary">rpl30</name>
    <name type="ordered locus">M164_1435</name>
</gene>
<accession>C4KHH7</accession>
<reference key="1">
    <citation type="journal article" date="2009" name="Proc. Natl. Acad. Sci. U.S.A.">
        <title>Biogeography of the Sulfolobus islandicus pan-genome.</title>
        <authorList>
            <person name="Reno M.L."/>
            <person name="Held N.L."/>
            <person name="Fields C.J."/>
            <person name="Burke P.V."/>
            <person name="Whitaker R.J."/>
        </authorList>
    </citation>
    <scope>NUCLEOTIDE SEQUENCE [LARGE SCALE GENOMIC DNA]</scope>
    <source>
        <strain>M.16.4 / Kamchatka #3</strain>
    </source>
</reference>
<evidence type="ECO:0000255" key="1">
    <source>
        <dbReference type="HAMAP-Rule" id="MF_01371"/>
    </source>
</evidence>
<evidence type="ECO:0000305" key="2"/>
<dbReference type="EMBL" id="CP001402">
    <property type="protein sequence ID" value="ACR42041.1"/>
    <property type="molecule type" value="Genomic_DNA"/>
</dbReference>
<dbReference type="SMR" id="C4KHH7"/>
<dbReference type="KEGG" id="sid:M164_1435"/>
<dbReference type="HOGENOM" id="CLU_055156_6_0_2"/>
<dbReference type="Proteomes" id="UP000001479">
    <property type="component" value="Chromosome"/>
</dbReference>
<dbReference type="GO" id="GO:0022625">
    <property type="term" value="C:cytosolic large ribosomal subunit"/>
    <property type="evidence" value="ECO:0007669"/>
    <property type="project" value="TreeGrafter"/>
</dbReference>
<dbReference type="GO" id="GO:0003723">
    <property type="term" value="F:RNA binding"/>
    <property type="evidence" value="ECO:0007669"/>
    <property type="project" value="TreeGrafter"/>
</dbReference>
<dbReference type="GO" id="GO:0003735">
    <property type="term" value="F:structural constituent of ribosome"/>
    <property type="evidence" value="ECO:0007669"/>
    <property type="project" value="InterPro"/>
</dbReference>
<dbReference type="GO" id="GO:0000463">
    <property type="term" value="P:maturation of LSU-rRNA from tricistronic rRNA transcript (SSU-rRNA, 5.8S rRNA, LSU-rRNA)"/>
    <property type="evidence" value="ECO:0007669"/>
    <property type="project" value="TreeGrafter"/>
</dbReference>
<dbReference type="GO" id="GO:0006412">
    <property type="term" value="P:translation"/>
    <property type="evidence" value="ECO:0007669"/>
    <property type="project" value="UniProtKB-UniRule"/>
</dbReference>
<dbReference type="CDD" id="cd01657">
    <property type="entry name" value="Ribosomal_L7_archeal_euk"/>
    <property type="match status" value="1"/>
</dbReference>
<dbReference type="Gene3D" id="1.10.15.30">
    <property type="match status" value="1"/>
</dbReference>
<dbReference type="Gene3D" id="3.30.1390.20">
    <property type="entry name" value="Ribosomal protein L30, ferredoxin-like fold domain"/>
    <property type="match status" value="1"/>
</dbReference>
<dbReference type="HAMAP" id="MF_01371_A">
    <property type="entry name" value="Ribosomal_uL30_A"/>
    <property type="match status" value="1"/>
</dbReference>
<dbReference type="InterPro" id="IPR036919">
    <property type="entry name" value="Ribo_uL30_ferredoxin-like_sf"/>
</dbReference>
<dbReference type="InterPro" id="IPR039699">
    <property type="entry name" value="Ribosomal_uL30"/>
</dbReference>
<dbReference type="InterPro" id="IPR005997">
    <property type="entry name" value="Ribosomal_uL30_arc"/>
</dbReference>
<dbReference type="InterPro" id="IPR035808">
    <property type="entry name" value="Ribosomal_uL30_euk_arc"/>
</dbReference>
<dbReference type="InterPro" id="IPR016082">
    <property type="entry name" value="Ribosomal_uL30_ferredoxin-like"/>
</dbReference>
<dbReference type="NCBIfam" id="NF004711">
    <property type="entry name" value="PRK06049.1"/>
    <property type="match status" value="1"/>
</dbReference>
<dbReference type="NCBIfam" id="TIGR01309">
    <property type="entry name" value="uL30_arch"/>
    <property type="match status" value="1"/>
</dbReference>
<dbReference type="PANTHER" id="PTHR11524">
    <property type="entry name" value="60S RIBOSOMAL PROTEIN L7"/>
    <property type="match status" value="1"/>
</dbReference>
<dbReference type="PANTHER" id="PTHR11524:SF16">
    <property type="entry name" value="LARGE RIBOSOMAL SUBUNIT PROTEIN UL30"/>
    <property type="match status" value="1"/>
</dbReference>
<dbReference type="Pfam" id="PF00327">
    <property type="entry name" value="Ribosomal_L30"/>
    <property type="match status" value="1"/>
</dbReference>
<dbReference type="SUPFAM" id="SSF55129">
    <property type="entry name" value="Ribosomal protein L30p/L7e"/>
    <property type="match status" value="1"/>
</dbReference>